<keyword id="KW-0521">NADP</keyword>
<keyword id="KW-0560">Oxidoreductase</keyword>
<accession>A2RL29</accession>
<reference key="1">
    <citation type="journal article" date="2007" name="J. Bacteriol.">
        <title>The complete genome sequence of the lactic acid bacterial paradigm Lactococcus lactis subsp. cremoris MG1363.</title>
        <authorList>
            <person name="Wegmann U."/>
            <person name="O'Connell-Motherway M."/>
            <person name="Zomer A."/>
            <person name="Buist G."/>
            <person name="Shearman C."/>
            <person name="Canchaya C."/>
            <person name="Ventura M."/>
            <person name="Goesmann A."/>
            <person name="Gasson M.J."/>
            <person name="Kuipers O.P."/>
            <person name="van Sinderen D."/>
            <person name="Kok J."/>
        </authorList>
    </citation>
    <scope>NUCLEOTIDE SEQUENCE [LARGE SCALE GENOMIC DNA]</scope>
    <source>
        <strain>MG1363</strain>
    </source>
</reference>
<dbReference type="EC" id="1.7.1.7" evidence="1"/>
<dbReference type="EMBL" id="AM406671">
    <property type="protein sequence ID" value="CAL97995.1"/>
    <property type="molecule type" value="Genomic_DNA"/>
</dbReference>
<dbReference type="RefSeq" id="WP_011835272.1">
    <property type="nucleotide sequence ID" value="NC_009004.1"/>
</dbReference>
<dbReference type="SMR" id="A2RL29"/>
<dbReference type="STRING" id="416870.llmg_1412"/>
<dbReference type="KEGG" id="llm:llmg_1412"/>
<dbReference type="eggNOG" id="COG0516">
    <property type="taxonomic scope" value="Bacteria"/>
</dbReference>
<dbReference type="HOGENOM" id="CLU_022552_5_0_9"/>
<dbReference type="OrthoDB" id="9805398at2"/>
<dbReference type="PhylomeDB" id="A2RL29"/>
<dbReference type="Proteomes" id="UP000000364">
    <property type="component" value="Chromosome"/>
</dbReference>
<dbReference type="GO" id="GO:0005829">
    <property type="term" value="C:cytosol"/>
    <property type="evidence" value="ECO:0007669"/>
    <property type="project" value="TreeGrafter"/>
</dbReference>
<dbReference type="GO" id="GO:1902560">
    <property type="term" value="C:GMP reductase complex"/>
    <property type="evidence" value="ECO:0007669"/>
    <property type="project" value="InterPro"/>
</dbReference>
<dbReference type="GO" id="GO:0003920">
    <property type="term" value="F:GMP reductase activity"/>
    <property type="evidence" value="ECO:0007669"/>
    <property type="project" value="UniProtKB-UniRule"/>
</dbReference>
<dbReference type="GO" id="GO:0016627">
    <property type="term" value="F:oxidoreductase activity, acting on the CH-CH group of donors"/>
    <property type="evidence" value="ECO:0007669"/>
    <property type="project" value="InterPro"/>
</dbReference>
<dbReference type="GO" id="GO:0006207">
    <property type="term" value="P:'de novo' pyrimidine nucleobase biosynthetic process"/>
    <property type="evidence" value="ECO:0007669"/>
    <property type="project" value="InterPro"/>
</dbReference>
<dbReference type="GO" id="GO:0006163">
    <property type="term" value="P:purine nucleotide metabolic process"/>
    <property type="evidence" value="ECO:0007669"/>
    <property type="project" value="UniProtKB-UniRule"/>
</dbReference>
<dbReference type="CDD" id="cd00381">
    <property type="entry name" value="IMPDH"/>
    <property type="match status" value="1"/>
</dbReference>
<dbReference type="Gene3D" id="3.20.20.70">
    <property type="entry name" value="Aldolase class I"/>
    <property type="match status" value="1"/>
</dbReference>
<dbReference type="HAMAP" id="MF_01511">
    <property type="entry name" value="GMP_reduct_type2"/>
    <property type="match status" value="1"/>
</dbReference>
<dbReference type="InterPro" id="IPR013785">
    <property type="entry name" value="Aldolase_TIM"/>
</dbReference>
<dbReference type="InterPro" id="IPR001295">
    <property type="entry name" value="Dihydroorotate_DH_CS"/>
</dbReference>
<dbReference type="InterPro" id="IPR050139">
    <property type="entry name" value="GMP_reductase"/>
</dbReference>
<dbReference type="InterPro" id="IPR005994">
    <property type="entry name" value="GuaC_type_2"/>
</dbReference>
<dbReference type="InterPro" id="IPR015875">
    <property type="entry name" value="IMP_DH/GMP_Rdtase_CS"/>
</dbReference>
<dbReference type="InterPro" id="IPR001093">
    <property type="entry name" value="IMP_DH_GMPRt"/>
</dbReference>
<dbReference type="NCBIfam" id="TIGR01306">
    <property type="entry name" value="GMP_reduct_2"/>
    <property type="match status" value="1"/>
</dbReference>
<dbReference type="NCBIfam" id="NF003966">
    <property type="entry name" value="PRK05458.1"/>
    <property type="match status" value="1"/>
</dbReference>
<dbReference type="PANTHER" id="PTHR43170">
    <property type="entry name" value="GMP REDUCTASE"/>
    <property type="match status" value="1"/>
</dbReference>
<dbReference type="PANTHER" id="PTHR43170:SF5">
    <property type="entry name" value="GMP REDUCTASE"/>
    <property type="match status" value="1"/>
</dbReference>
<dbReference type="Pfam" id="PF00478">
    <property type="entry name" value="IMPDH"/>
    <property type="match status" value="1"/>
</dbReference>
<dbReference type="PIRSF" id="PIRSF036500">
    <property type="entry name" value="GMP_red_Firmic"/>
    <property type="match status" value="1"/>
</dbReference>
<dbReference type="SMART" id="SM01240">
    <property type="entry name" value="IMPDH"/>
    <property type="match status" value="1"/>
</dbReference>
<dbReference type="SUPFAM" id="SSF51412">
    <property type="entry name" value="Inosine monophosphate dehydrogenase (IMPDH)"/>
    <property type="match status" value="1"/>
</dbReference>
<dbReference type="PROSITE" id="PS00487">
    <property type="entry name" value="IMP_DH_GMP_RED"/>
    <property type="match status" value="1"/>
</dbReference>
<sequence>MNNLNSVFDYEDIQLIPNKCVINSRSEADTSVKLGNYTFKLPVVPANMQTIIDDKIAEMLAKEGYFYIMHRFEAENRAAFIKKMHKDGLIASISVGVKADEHAFIREISAEALIPEFITIDIAHGHADSVIKTIQLIKRLMPQTFVIAGNVGTPEAVRELENAGADATKVGIGPGKVCITKVKTGFGTGGWQLAAVKWCAKAASKPVIADGGIRTHGDVAKSIRMGATMVMVGSLFAAHEESPGQTVERDGQLFKEYFGSASEYQKGEHKNVEGKKILLPHKGSLKDTLKEMEEDLQSSISYAGGRDLSALTKVDYVVVKNSIWNGDAI</sequence>
<proteinExistence type="inferred from homology"/>
<protein>
    <recommendedName>
        <fullName evidence="1">GMP reductase</fullName>
        <ecNumber evidence="1">1.7.1.7</ecNumber>
    </recommendedName>
    <alternativeName>
        <fullName evidence="1">Guanosine 5'-monophosphate oxidoreductase</fullName>
        <shortName evidence="1">Guanosine monophosphate reductase</shortName>
    </alternativeName>
</protein>
<gene>
    <name evidence="1" type="primary">guaC</name>
    <name type="ordered locus">llmg_1412</name>
</gene>
<comment type="function">
    <text evidence="1">Catalyzes the irreversible NADPH-dependent deamination of GMP to IMP. It functions in the conversion of nucleobase, nucleoside and nucleotide derivatives of G to A nucleotides, and in maintaining the intracellular balance of A and G nucleotides.</text>
</comment>
<comment type="catalytic activity">
    <reaction evidence="1">
        <text>IMP + NH4(+) + NADP(+) = GMP + NADPH + 2 H(+)</text>
        <dbReference type="Rhea" id="RHEA:17185"/>
        <dbReference type="ChEBI" id="CHEBI:15378"/>
        <dbReference type="ChEBI" id="CHEBI:28938"/>
        <dbReference type="ChEBI" id="CHEBI:57783"/>
        <dbReference type="ChEBI" id="CHEBI:58053"/>
        <dbReference type="ChEBI" id="CHEBI:58115"/>
        <dbReference type="ChEBI" id="CHEBI:58349"/>
        <dbReference type="EC" id="1.7.1.7"/>
    </reaction>
</comment>
<comment type="similarity">
    <text evidence="1">Belongs to the IMPDH/GMPR family. GuaC type 2 subfamily.</text>
</comment>
<feature type="chain" id="PRO_0000292054" description="GMP reductase">
    <location>
        <begin position="1"/>
        <end position="329"/>
    </location>
</feature>
<feature type="active site" description="Thioimidate intermediate" evidence="1">
    <location>
        <position position="178"/>
    </location>
</feature>
<feature type="binding site" evidence="1">
    <location>
        <begin position="207"/>
        <end position="230"/>
    </location>
    <ligand>
        <name>NADP(+)</name>
        <dbReference type="ChEBI" id="CHEBI:58349"/>
    </ligand>
</feature>
<name>GUAC_LACLM</name>
<organism>
    <name type="scientific">Lactococcus lactis subsp. cremoris (strain MG1363)</name>
    <dbReference type="NCBI Taxonomy" id="416870"/>
    <lineage>
        <taxon>Bacteria</taxon>
        <taxon>Bacillati</taxon>
        <taxon>Bacillota</taxon>
        <taxon>Bacilli</taxon>
        <taxon>Lactobacillales</taxon>
        <taxon>Streptococcaceae</taxon>
        <taxon>Lactococcus</taxon>
        <taxon>Lactococcus cremoris subsp. cremoris</taxon>
    </lineage>
</organism>
<evidence type="ECO:0000255" key="1">
    <source>
        <dbReference type="HAMAP-Rule" id="MF_01511"/>
    </source>
</evidence>